<comment type="function">
    <text evidence="5 6 10">Acyltransferase which catalyzes the transfer of an acyl group from an acyl-CoA to a lysophosphatidylinositol (1-acylglycerophosphatidylinositol or LPI) leading to the production of a phosphatidylinositol (1,2-diacyl-sn-glycero-3-phosphoinositol or PI) and participates in the reacylation step of the phospholipid remodeling pathway also known as the Lands cycle (PubMed:18094042, PubMed:18772128). Prefers arachidonoyl-CoA as the acyl donor, thus contributing to the regulation of free levels arachidonic acid in cell (PubMed:18094042, PubMed:18772128). In liver, participates in the regulation of triglyceride metabolism through the phosphatidylinositol acyl-chain remodeling regulation (PubMed:32253259).</text>
</comment>
<comment type="catalytic activity">
    <reaction evidence="5 6">
        <text>a 1-acyl-sn-glycero-3-phospho-(1D-myo-inositol) + (5Z,8Z,11Z,14Z)-eicosatetraenoyl-CoA = a 1-acyl-2-(5Z,8Z,11Z,14Z-eicosatetraenoyl)-sn-glycero-3-phospho-(1D-myo-inositol) + CoA</text>
        <dbReference type="Rhea" id="RHEA:37015"/>
        <dbReference type="ChEBI" id="CHEBI:57287"/>
        <dbReference type="ChEBI" id="CHEBI:57368"/>
        <dbReference type="ChEBI" id="CHEBI:64771"/>
        <dbReference type="ChEBI" id="CHEBI:75243"/>
    </reaction>
    <physiologicalReaction direction="left-to-right" evidence="6">
        <dbReference type="Rhea" id="RHEA:37016"/>
    </physiologicalReaction>
</comment>
<comment type="catalytic activity">
    <reaction evidence="6">
        <text>(5Z,8Z,11Z,14Z)-eicosatetraenoyl-CoA + 1-hexadecanoyl-sn-glycero-3-phosphocholine = 1-hexadecanoyl-2-(5Z,8Z,11Z,14Z-eicosatetraenoyl)-sn-glycero-3-phosphocholine + CoA</text>
        <dbReference type="Rhea" id="RHEA:35999"/>
        <dbReference type="ChEBI" id="CHEBI:57287"/>
        <dbReference type="ChEBI" id="CHEBI:57368"/>
        <dbReference type="ChEBI" id="CHEBI:72998"/>
        <dbReference type="ChEBI" id="CHEBI:73003"/>
    </reaction>
    <physiologicalReaction direction="left-to-right" evidence="6">
        <dbReference type="Rhea" id="RHEA:36000"/>
    </physiologicalReaction>
</comment>
<comment type="catalytic activity">
    <reaction evidence="5 6">
        <text>a 1-acyl-sn-glycero-3-phospho-(1D-myo-inositol) + an acyl-CoA = a 1,2-diacyl-sn-glycero-3-phospho-(1D-myo-inositol) + CoA</text>
        <dbReference type="Rhea" id="RHEA:33195"/>
        <dbReference type="ChEBI" id="CHEBI:57287"/>
        <dbReference type="ChEBI" id="CHEBI:57880"/>
        <dbReference type="ChEBI" id="CHEBI:58342"/>
        <dbReference type="ChEBI" id="CHEBI:64771"/>
    </reaction>
    <physiologicalReaction direction="left-to-right" evidence="6">
        <dbReference type="Rhea" id="RHEA:33196"/>
    </physiologicalReaction>
</comment>
<comment type="catalytic activity">
    <reaction evidence="1">
        <text>1-octadecanoyl-sn-glycero-3-phospho-(1D-myo-inositol) + (5Z,8Z,11Z,14Z)-eicosatetraenoyl-CoA = 1-octadecanoyl-2-(5Z,8Z,11Z,14Z-eicosatetraenoyl)-sn-glycero-3-phospho-(1D-myo-inositol) + CoA</text>
        <dbReference type="Rhea" id="RHEA:36835"/>
        <dbReference type="ChEBI" id="CHEBI:57287"/>
        <dbReference type="ChEBI" id="CHEBI:57368"/>
        <dbReference type="ChEBI" id="CHEBI:74243"/>
        <dbReference type="ChEBI" id="CHEBI:133606"/>
    </reaction>
    <physiologicalReaction direction="left-to-right" evidence="1">
        <dbReference type="Rhea" id="RHEA:36836"/>
    </physiologicalReaction>
</comment>
<comment type="activity regulation">
    <text evidence="6">Activity is inhibited by thimerosal.</text>
</comment>
<comment type="pathway">
    <text evidence="5 6">Lipid metabolism; phospholipid metabolism.</text>
</comment>
<comment type="subunit">
    <text evidence="7">Interacts with SPTSSA; the interaction facilitates MBOAT7 location to mitochondria-associated membranes (MAMs).</text>
</comment>
<comment type="interaction">
    <interactant intactId="EBI-6116499">
        <id>Q96N66</id>
    </interactant>
    <interactant intactId="EBI-2800345">
        <id>Q86WV6</id>
        <label>STING1</label>
    </interactant>
    <organismsDiffer>false</organismsDiffer>
    <experiments>2</experiments>
</comment>
<comment type="interaction">
    <interactant intactId="EBI-6116499">
        <id>Q96N66</id>
    </interactant>
    <interactant intactId="EBI-6116986">
        <id>Q8VCW4</id>
        <label>Unc93b1</label>
    </interactant>
    <organismsDiffer>true</organismsDiffer>
    <experiments>2</experiments>
</comment>
<comment type="subcellular location">
    <subcellularLocation>
        <location evidence="7 9">Endoplasmic reticulum membrane</location>
        <topology evidence="16">Multi-pass membrane protein</topology>
    </subcellularLocation>
    <text evidence="7">Localized in specific membrane structures termed mitochondria-associated membranes (MAMs) which connect the endoplasmic reticulum (ER) and the mitochondria.</text>
</comment>
<comment type="alternative products">
    <event type="alternative splicing"/>
    <isoform>
        <id>Q96N66-1</id>
        <name>1</name>
        <sequence type="displayed"/>
    </isoform>
    <isoform>
        <id>Q96N66-2</id>
        <name>2</name>
        <sequence type="described" ref="VSP_030967"/>
    </isoform>
    <isoform>
        <id>Q96N66-3</id>
        <name>3</name>
        <sequence type="described" ref="VSP_030968"/>
    </isoform>
</comment>
<comment type="tissue specificity">
    <text evidence="6">Overexpressed in metastatic breast and bladder carcinomas relative to normal breast epithelium and urothelium.</text>
</comment>
<comment type="disease" evidence="8">
    <disease id="DI-04875">
        <name>Intellectual developmental disorder, autosomal recessive 57</name>
        <acronym>MRT57</acronym>
        <description>A disorder characterized by significantly below average general intellectual functioning associated with impairments in adaptive behavior and manifested during the developmental period. MRT57 patients have moderate to severe intellectual disability, and delayed psychomotor development with poor or absent speech. Some patients manifest seizures and autistic features.</description>
        <dbReference type="MIM" id="617188"/>
    </disease>
    <text>The disease is caused by variants affecting the gene represented in this entry.</text>
</comment>
<comment type="similarity">
    <text evidence="15">Belongs to the membrane-bound acyltransferase family.</text>
</comment>
<comment type="sequence caution" evidence="15">
    <conflict type="frameshift">
        <sequence resource="EMBL-CDS" id="AAB37433"/>
    </conflict>
</comment>
<evidence type="ECO:0000250" key="1">
    <source>
        <dbReference type="UniProtKB" id="Q8CHK3"/>
    </source>
</evidence>
<evidence type="ECO:0000255" key="2"/>
<evidence type="ECO:0000256" key="3">
    <source>
        <dbReference type="SAM" id="MobiDB-lite"/>
    </source>
</evidence>
<evidence type="ECO:0000269" key="4">
    <source>
    </source>
</evidence>
<evidence type="ECO:0000269" key="5">
    <source>
    </source>
</evidence>
<evidence type="ECO:0000269" key="6">
    <source>
    </source>
</evidence>
<evidence type="ECO:0000269" key="7">
    <source>
    </source>
</evidence>
<evidence type="ECO:0000269" key="8">
    <source>
    </source>
</evidence>
<evidence type="ECO:0000269" key="9">
    <source>
    </source>
</evidence>
<evidence type="ECO:0000269" key="10">
    <source>
    </source>
</evidence>
<evidence type="ECO:0000303" key="11">
    <source>
    </source>
</evidence>
<evidence type="ECO:0000303" key="12">
    <source>
    </source>
</evidence>
<evidence type="ECO:0000303" key="13">
    <source>
    </source>
</evidence>
<evidence type="ECO:0000303" key="14">
    <source>
    </source>
</evidence>
<evidence type="ECO:0000305" key="15"/>
<evidence type="ECO:0000305" key="16">
    <source>
    </source>
</evidence>
<evidence type="ECO:0000312" key="17">
    <source>
        <dbReference type="HGNC" id="HGNC:15505"/>
    </source>
</evidence>
<feature type="chain" id="PRO_0000317457" description="Membrane-bound acylglycerophosphatidylinositol O-acyltransferase MBOAT7">
    <location>
        <begin position="1"/>
        <end position="472"/>
    </location>
</feature>
<feature type="topological domain" description="Cytoplasmic" evidence="16">
    <location>
        <begin position="1"/>
        <end position="5"/>
    </location>
</feature>
<feature type="transmembrane region" description="Helical" evidence="16">
    <location>
        <begin position="6"/>
        <end position="22"/>
    </location>
</feature>
<feature type="topological domain" description="Lumenal" evidence="16">
    <location>
        <begin position="23"/>
        <end position="33"/>
    </location>
</feature>
<feature type="transmembrane region" description="Helical" evidence="16">
    <location>
        <begin position="34"/>
        <end position="57"/>
    </location>
</feature>
<feature type="topological domain" description="Cytoplasmic" evidence="16">
    <location>
        <begin position="58"/>
        <end position="73"/>
    </location>
</feature>
<feature type="transmembrane region" description="Helical" evidence="16">
    <location>
        <begin position="74"/>
        <end position="93"/>
    </location>
</feature>
<feature type="topological domain" description="Lumenal" evidence="16">
    <location>
        <begin position="94"/>
        <end position="194"/>
    </location>
</feature>
<feature type="transmembrane region" description="Helical" evidence="16">
    <location>
        <begin position="195"/>
        <end position="212"/>
    </location>
</feature>
<feature type="topological domain" description="Cytoplasmic" evidence="16">
    <location>
        <begin position="213"/>
        <end position="231"/>
    </location>
</feature>
<feature type="transmembrane region" description="Helical" evidence="16">
    <location>
        <begin position="232"/>
        <end position="261"/>
    </location>
</feature>
<feature type="topological domain" description="Lumenal" evidence="16">
    <location>
        <begin position="262"/>
        <end position="426"/>
    </location>
</feature>
<feature type="transmembrane region" description="Helical" evidence="16">
    <location>
        <begin position="427"/>
        <end position="447"/>
    </location>
</feature>
<feature type="topological domain" description="Cytoplasmic" evidence="16">
    <location>
        <begin position="448"/>
        <end position="472"/>
    </location>
</feature>
<feature type="region of interest" description="Disordered" evidence="3">
    <location>
        <begin position="453"/>
        <end position="472"/>
    </location>
</feature>
<feature type="glycosylation site" description="N-linked (GlcNAc...) asparagine" evidence="2">
    <location>
        <position position="321"/>
    </location>
</feature>
<feature type="splice variant" id="VSP_030967" description="In isoform 2." evidence="11 12">
    <original>MSPEEWTYLVVLLISIPIGFLFKKAGPGLKRWGAAAVGLGLTLFTCGPHTLHSLVTILGTWALIQAQPCSCHALALAWTFSYLLFFRALSLLGLPTPTPFTNAVQLLLTLK</original>
    <variation>MGSSRCGPGAHPVHLWPPHFAFSGHHPRDLGPHSGPAL</variation>
    <location>
        <begin position="1"/>
        <end position="111"/>
    </location>
</feature>
<feature type="splice variant" id="VSP_030968" description="In isoform 3." evidence="12">
    <location>
        <begin position="345"/>
        <end position="472"/>
    </location>
</feature>
<feature type="sequence variant" id="VAR_078044" description="In MRT57." evidence="8">
    <location>
        <begin position="253"/>
        <end position="259"/>
    </location>
</feature>
<feature type="sequence variant" id="VAR_038526" description="In dbSNP:rs17855385." evidence="4">
    <original>F</original>
    <variation>L</variation>
    <location>
        <position position="261"/>
    </location>
</feature>
<feature type="sequence variant" id="VAR_038527" description="In dbSNP:rs35909464.">
    <original>V</original>
    <variation>L</variation>
    <location>
        <position position="415"/>
    </location>
</feature>
<feature type="sequence conflict" description="In Ref. 2; BAB71043." evidence="15" ref="2">
    <original>S</original>
    <variation>P</variation>
    <location>
        <position position="70"/>
    </location>
</feature>
<feature type="sequence conflict" description="In Ref. 6; AAB37433." evidence="15" ref="6">
    <original>S</original>
    <variation>T</variation>
    <location>
        <position position="345"/>
    </location>
</feature>
<keyword id="KW-0002">3D-structure</keyword>
<keyword id="KW-0012">Acyltransferase</keyword>
<keyword id="KW-0025">Alternative splicing</keyword>
<keyword id="KW-0225">Disease variant</keyword>
<keyword id="KW-0256">Endoplasmic reticulum</keyword>
<keyword id="KW-0325">Glycoprotein</keyword>
<keyword id="KW-0991">Intellectual disability</keyword>
<keyword id="KW-0444">Lipid biosynthesis</keyword>
<keyword id="KW-0443">Lipid metabolism</keyword>
<keyword id="KW-0472">Membrane</keyword>
<keyword id="KW-0594">Phospholipid biosynthesis</keyword>
<keyword id="KW-1208">Phospholipid metabolism</keyword>
<keyword id="KW-1267">Proteomics identification</keyword>
<keyword id="KW-1185">Reference proteome</keyword>
<keyword id="KW-0808">Transferase</keyword>
<keyword id="KW-0812">Transmembrane</keyword>
<keyword id="KW-1133">Transmembrane helix</keyword>
<gene>
    <name evidence="17" type="primary">MBOAT7</name>
    <name type="synonym">BB1</name>
    <name type="synonym">LENG4</name>
    <name type="synonym">OACT7</name>
</gene>
<proteinExistence type="evidence at protein level"/>
<sequence length="472" mass="52765">MSPEEWTYLVVLLISIPIGFLFKKAGPGLKRWGAAAVGLGLTLFTCGPHTLHSLVTILGTWALIQAQPCSCHALALAWTFSYLLFFRALSLLGLPTPTPFTNAVQLLLTLKLVSLASEVQDLHLAQRKEMASGFSKGPTLGLLPDVPSLMETLSYSYCYVGIMTGPFFRYRTYLDWLEQPFPGAVPSLRPLLRRAWPAPLFGLLFLLSSHLFPLEAVREDAFYARPLPARLFYMIPVFFAFRMRFYVAWIAAECGCIAAGFGAYPVAAKARAGGGPTLQCPPPSSPEKAASLEYDYETIRNIDCYSTDFCVRVRDGMRYWNMTVQWWLAQYIYKSAPARSYVLRSAWTMLLSAYWHGLHPGYYLSFLTIPLCLAAEGRLESALRGRLSPGGQKAWDWVHWFLKMRAYDYMCMGFVLLSLADTLRYWASIYFCIHFLALAALGLGLALGGGSPSRRKAASQPTSLAPEKLREE</sequence>
<reference key="1">
    <citation type="journal article" date="2008" name="Mol. Biol. Cell">
        <title>Caenorhabditis elegans mboa-7, a member of the MBOAT family, is required for selective incorporation of polyunsaturated fatty acids into phosphatidylinositol.</title>
        <authorList>
            <person name="Lee H.C."/>
            <person name="Inoue T."/>
            <person name="Imae R."/>
            <person name="Kono N."/>
            <person name="Shirae S."/>
            <person name="Matsuda S."/>
            <person name="Gengyo-Ando K."/>
            <person name="Mitani S."/>
            <person name="Arai H."/>
        </authorList>
    </citation>
    <scope>NUCLEOTIDE SEQUENCE [MRNA] (ISOFORM 1)</scope>
    <scope>FUNCTION</scope>
    <scope>CATALYTIC ACTIVITY</scope>
    <scope>PATHWAY</scope>
</reference>
<reference key="2">
    <citation type="journal article" date="2004" name="Nat. Genet.">
        <title>Complete sequencing and characterization of 21,243 full-length human cDNAs.</title>
        <authorList>
            <person name="Ota T."/>
            <person name="Suzuki Y."/>
            <person name="Nishikawa T."/>
            <person name="Otsuki T."/>
            <person name="Sugiyama T."/>
            <person name="Irie R."/>
            <person name="Wakamatsu A."/>
            <person name="Hayashi K."/>
            <person name="Sato H."/>
            <person name="Nagai K."/>
            <person name="Kimura K."/>
            <person name="Makita H."/>
            <person name="Sekine M."/>
            <person name="Obayashi M."/>
            <person name="Nishi T."/>
            <person name="Shibahara T."/>
            <person name="Tanaka T."/>
            <person name="Ishii S."/>
            <person name="Yamamoto J."/>
            <person name="Saito K."/>
            <person name="Kawai Y."/>
            <person name="Isono Y."/>
            <person name="Nakamura Y."/>
            <person name="Nagahari K."/>
            <person name="Murakami K."/>
            <person name="Yasuda T."/>
            <person name="Iwayanagi T."/>
            <person name="Wagatsuma M."/>
            <person name="Shiratori A."/>
            <person name="Sudo H."/>
            <person name="Hosoiri T."/>
            <person name="Kaku Y."/>
            <person name="Kodaira H."/>
            <person name="Kondo H."/>
            <person name="Sugawara M."/>
            <person name="Takahashi M."/>
            <person name="Kanda K."/>
            <person name="Yokoi T."/>
            <person name="Furuya T."/>
            <person name="Kikkawa E."/>
            <person name="Omura Y."/>
            <person name="Abe K."/>
            <person name="Kamihara K."/>
            <person name="Katsuta N."/>
            <person name="Sato K."/>
            <person name="Tanikawa M."/>
            <person name="Yamazaki M."/>
            <person name="Ninomiya K."/>
            <person name="Ishibashi T."/>
            <person name="Yamashita H."/>
            <person name="Murakawa K."/>
            <person name="Fujimori K."/>
            <person name="Tanai H."/>
            <person name="Kimata M."/>
            <person name="Watanabe M."/>
            <person name="Hiraoka S."/>
            <person name="Chiba Y."/>
            <person name="Ishida S."/>
            <person name="Ono Y."/>
            <person name="Takiguchi S."/>
            <person name="Watanabe S."/>
            <person name="Yosida M."/>
            <person name="Hotuta T."/>
            <person name="Kusano J."/>
            <person name="Kanehori K."/>
            <person name="Takahashi-Fujii A."/>
            <person name="Hara H."/>
            <person name="Tanase T.-O."/>
            <person name="Nomura Y."/>
            <person name="Togiya S."/>
            <person name="Komai F."/>
            <person name="Hara R."/>
            <person name="Takeuchi K."/>
            <person name="Arita M."/>
            <person name="Imose N."/>
            <person name="Musashino K."/>
            <person name="Yuuki H."/>
            <person name="Oshima A."/>
            <person name="Sasaki N."/>
            <person name="Aotsuka S."/>
            <person name="Yoshikawa Y."/>
            <person name="Matsunawa H."/>
            <person name="Ichihara T."/>
            <person name="Shiohata N."/>
            <person name="Sano S."/>
            <person name="Moriya S."/>
            <person name="Momiyama H."/>
            <person name="Satoh N."/>
            <person name="Takami S."/>
            <person name="Terashima Y."/>
            <person name="Suzuki O."/>
            <person name="Nakagawa S."/>
            <person name="Senoh A."/>
            <person name="Mizoguchi H."/>
            <person name="Goto Y."/>
            <person name="Shimizu F."/>
            <person name="Wakebe H."/>
            <person name="Hishigaki H."/>
            <person name="Watanabe T."/>
            <person name="Sugiyama A."/>
            <person name="Takemoto M."/>
            <person name="Kawakami B."/>
            <person name="Yamazaki M."/>
            <person name="Watanabe K."/>
            <person name="Kumagai A."/>
            <person name="Itakura S."/>
            <person name="Fukuzumi Y."/>
            <person name="Fujimori Y."/>
            <person name="Komiyama M."/>
            <person name="Tashiro H."/>
            <person name="Tanigami A."/>
            <person name="Fujiwara T."/>
            <person name="Ono T."/>
            <person name="Yamada K."/>
            <person name="Fujii Y."/>
            <person name="Ozaki K."/>
            <person name="Hirao M."/>
            <person name="Ohmori Y."/>
            <person name="Kawabata A."/>
            <person name="Hikiji T."/>
            <person name="Kobatake N."/>
            <person name="Inagaki H."/>
            <person name="Ikema Y."/>
            <person name="Okamoto S."/>
            <person name="Okitani R."/>
            <person name="Kawakami T."/>
            <person name="Noguchi S."/>
            <person name="Itoh T."/>
            <person name="Shigeta K."/>
            <person name="Senba T."/>
            <person name="Matsumura K."/>
            <person name="Nakajima Y."/>
            <person name="Mizuno T."/>
            <person name="Morinaga M."/>
            <person name="Sasaki M."/>
            <person name="Togashi T."/>
            <person name="Oyama M."/>
            <person name="Hata H."/>
            <person name="Watanabe M."/>
            <person name="Komatsu T."/>
            <person name="Mizushima-Sugano J."/>
            <person name="Satoh T."/>
            <person name="Shirai Y."/>
            <person name="Takahashi Y."/>
            <person name="Nakagawa K."/>
            <person name="Okumura K."/>
            <person name="Nagase T."/>
            <person name="Nomura N."/>
            <person name="Kikuchi H."/>
            <person name="Masuho Y."/>
            <person name="Yamashita R."/>
            <person name="Nakai K."/>
            <person name="Yada T."/>
            <person name="Nakamura Y."/>
            <person name="Ohara O."/>
            <person name="Isogai T."/>
            <person name="Sugano S."/>
        </authorList>
    </citation>
    <scope>NUCLEOTIDE SEQUENCE [LARGE SCALE MRNA] (ISOFORMS 1 AND 2)</scope>
</reference>
<reference key="3">
    <citation type="journal article" date="2004" name="Nature">
        <title>The DNA sequence and biology of human chromosome 19.</title>
        <authorList>
            <person name="Grimwood J."/>
            <person name="Gordon L.A."/>
            <person name="Olsen A.S."/>
            <person name="Terry A."/>
            <person name="Schmutz J."/>
            <person name="Lamerdin J.E."/>
            <person name="Hellsten U."/>
            <person name="Goodstein D."/>
            <person name="Couronne O."/>
            <person name="Tran-Gyamfi M."/>
            <person name="Aerts A."/>
            <person name="Altherr M."/>
            <person name="Ashworth L."/>
            <person name="Bajorek E."/>
            <person name="Black S."/>
            <person name="Branscomb E."/>
            <person name="Caenepeel S."/>
            <person name="Carrano A.V."/>
            <person name="Caoile C."/>
            <person name="Chan Y.M."/>
            <person name="Christensen M."/>
            <person name="Cleland C.A."/>
            <person name="Copeland A."/>
            <person name="Dalin E."/>
            <person name="Dehal P."/>
            <person name="Denys M."/>
            <person name="Detter J.C."/>
            <person name="Escobar J."/>
            <person name="Flowers D."/>
            <person name="Fotopulos D."/>
            <person name="Garcia C."/>
            <person name="Georgescu A.M."/>
            <person name="Glavina T."/>
            <person name="Gomez M."/>
            <person name="Gonzales E."/>
            <person name="Groza M."/>
            <person name="Hammon N."/>
            <person name="Hawkins T."/>
            <person name="Haydu L."/>
            <person name="Ho I."/>
            <person name="Huang W."/>
            <person name="Israni S."/>
            <person name="Jett J."/>
            <person name="Kadner K."/>
            <person name="Kimball H."/>
            <person name="Kobayashi A."/>
            <person name="Larionov V."/>
            <person name="Leem S.-H."/>
            <person name="Lopez F."/>
            <person name="Lou Y."/>
            <person name="Lowry S."/>
            <person name="Malfatti S."/>
            <person name="Martinez D."/>
            <person name="McCready P.M."/>
            <person name="Medina C."/>
            <person name="Morgan J."/>
            <person name="Nelson K."/>
            <person name="Nolan M."/>
            <person name="Ovcharenko I."/>
            <person name="Pitluck S."/>
            <person name="Pollard M."/>
            <person name="Popkie A.P."/>
            <person name="Predki P."/>
            <person name="Quan G."/>
            <person name="Ramirez L."/>
            <person name="Rash S."/>
            <person name="Retterer J."/>
            <person name="Rodriguez A."/>
            <person name="Rogers S."/>
            <person name="Salamov A."/>
            <person name="Salazar A."/>
            <person name="She X."/>
            <person name="Smith D."/>
            <person name="Slezak T."/>
            <person name="Solovyev V."/>
            <person name="Thayer N."/>
            <person name="Tice H."/>
            <person name="Tsai M."/>
            <person name="Ustaszewska A."/>
            <person name="Vo N."/>
            <person name="Wagner M."/>
            <person name="Wheeler J."/>
            <person name="Wu K."/>
            <person name="Xie G."/>
            <person name="Yang J."/>
            <person name="Dubchak I."/>
            <person name="Furey T.S."/>
            <person name="DeJong P."/>
            <person name="Dickson M."/>
            <person name="Gordon D."/>
            <person name="Eichler E.E."/>
            <person name="Pennacchio L.A."/>
            <person name="Richardson P."/>
            <person name="Stubbs L."/>
            <person name="Rokhsar D.S."/>
            <person name="Myers R.M."/>
            <person name="Rubin E.M."/>
            <person name="Lucas S.M."/>
        </authorList>
    </citation>
    <scope>NUCLEOTIDE SEQUENCE [LARGE SCALE GENOMIC DNA]</scope>
</reference>
<reference key="4">
    <citation type="submission" date="2005-07" db="EMBL/GenBank/DDBJ databases">
        <authorList>
            <person name="Mural R.J."/>
            <person name="Istrail S."/>
            <person name="Sutton G.G."/>
            <person name="Florea L."/>
            <person name="Halpern A.L."/>
            <person name="Mobarry C.M."/>
            <person name="Lippert R."/>
            <person name="Walenz B."/>
            <person name="Shatkay H."/>
            <person name="Dew I."/>
            <person name="Miller J.R."/>
            <person name="Flanigan M.J."/>
            <person name="Edwards N.J."/>
            <person name="Bolanos R."/>
            <person name="Fasulo D."/>
            <person name="Halldorsson B.V."/>
            <person name="Hannenhalli S."/>
            <person name="Turner R."/>
            <person name="Yooseph S."/>
            <person name="Lu F."/>
            <person name="Nusskern D.R."/>
            <person name="Shue B.C."/>
            <person name="Zheng X.H."/>
            <person name="Zhong F."/>
            <person name="Delcher A.L."/>
            <person name="Huson D.H."/>
            <person name="Kravitz S.A."/>
            <person name="Mouchard L."/>
            <person name="Reinert K."/>
            <person name="Remington K.A."/>
            <person name="Clark A.G."/>
            <person name="Waterman M.S."/>
            <person name="Eichler E.E."/>
            <person name="Adams M.D."/>
            <person name="Hunkapiller M.W."/>
            <person name="Myers E.W."/>
            <person name="Venter J.C."/>
        </authorList>
    </citation>
    <scope>NUCLEOTIDE SEQUENCE [LARGE SCALE GENOMIC DNA]</scope>
</reference>
<reference key="5">
    <citation type="journal article" date="2004" name="Genome Res.">
        <title>The status, quality, and expansion of the NIH full-length cDNA project: the Mammalian Gene Collection (MGC).</title>
        <authorList>
            <consortium name="The MGC Project Team"/>
        </authorList>
    </citation>
    <scope>NUCLEOTIDE SEQUENCE [LARGE SCALE MRNA] (ISOFORMS 2 AND 3)</scope>
    <scope>NUCLEOTIDE SEQUENCE [LARGE SCALE MRNA] OF 2-472 (ISOFORM 1)</scope>
    <scope>VARIANT LEU-261</scope>
    <source>
        <tissue>Colon</tissue>
        <tissue>Kidney</tissue>
        <tissue>Lung</tissue>
        <tissue>Muscle</tissue>
    </source>
</reference>
<reference key="6">
    <citation type="journal article" date="1996" name="Anticancer Res.">
        <title>Molecular analysis of a gene, BB1, overexpressed in bladder and breast carcinoma.</title>
        <authorList>
            <person name="Fukunaga-Johnson N."/>
            <person name="Lee S.W."/>
            <person name="Liebert M."/>
            <person name="Grossman H.B."/>
        </authorList>
    </citation>
    <scope>NUCLEOTIDE SEQUENCE [MRNA] OF 49-472 (ISOFORM 1)</scope>
</reference>
<reference key="7">
    <citation type="journal article" date="2008" name="J. Biol. Chem.">
        <title>Lysophospholipid acyltransferases and arachidonate recycling in human neutrophils.</title>
        <authorList>
            <person name="Gijon M.A."/>
            <person name="Riekhof W.R."/>
            <person name="Zarini S."/>
            <person name="Murphy R.C."/>
            <person name="Voelker D.R."/>
        </authorList>
    </citation>
    <scope>FUNCTION</scope>
    <scope>TISSUE SPECIFICITY</scope>
    <scope>SUBSTRATE SPECIFICITY</scope>
    <scope>CATALYTIC ACTIVITY</scope>
    <scope>ACTIVITY REGULATION</scope>
</reference>
<reference key="8">
    <citation type="journal article" date="2008" name="Proc. Natl. Acad. Sci. U.S.A.">
        <title>A quantitative atlas of mitotic phosphorylation.</title>
        <authorList>
            <person name="Dephoure N."/>
            <person name="Zhou C."/>
            <person name="Villen J."/>
            <person name="Beausoleil S.A."/>
            <person name="Bakalarski C.E."/>
            <person name="Elledge S.J."/>
            <person name="Gygi S.P."/>
        </authorList>
    </citation>
    <scope>IDENTIFICATION BY MASS SPECTROMETRY [LARGE SCALE ANALYSIS]</scope>
    <source>
        <tissue>Cervix carcinoma</tissue>
    </source>
</reference>
<reference key="9">
    <citation type="journal article" date="2011" name="BMC Syst. Biol.">
        <title>Initial characterization of the human central proteome.</title>
        <authorList>
            <person name="Burkard T.R."/>
            <person name="Planyavsky M."/>
            <person name="Kaupe I."/>
            <person name="Breitwieser F.P."/>
            <person name="Buerckstuemmer T."/>
            <person name="Bennett K.L."/>
            <person name="Superti-Furga G."/>
            <person name="Colinge J."/>
        </authorList>
    </citation>
    <scope>IDENTIFICATION BY MASS SPECTROMETRY [LARGE SCALE ANALYSIS]</scope>
</reference>
<reference key="10">
    <citation type="journal article" date="2013" name="Genes Cells">
        <title>Identification of small subunit of serine palmitoyltransferase a as a lysophosphatidylinositol acyltransferase 1-interacting protein.</title>
        <authorList>
            <person name="Hirata Y."/>
            <person name="Yamamori N."/>
            <person name="Kono N."/>
            <person name="Lee H.C."/>
            <person name="Inoue T."/>
            <person name="Arai H."/>
        </authorList>
    </citation>
    <scope>SUBCELLULAR LOCATION</scope>
    <scope>INTERACTION WITH SPTSSA</scope>
</reference>
<reference key="11">
    <citation type="journal article" date="2019" name="J. Struct. Biol.">
        <title>MBOAT7 is anchored to endomembranes by six transmembrane domains.</title>
        <authorList>
            <person name="Caddeo A."/>
            <person name="Jamialahmadi O."/>
            <person name="Solinas G."/>
            <person name="Pujia A."/>
            <person name="Mancina R.M."/>
            <person name="Pingitore P."/>
            <person name="Romeo S."/>
        </authorList>
    </citation>
    <scope>TOPOLOGY</scope>
    <scope>SUBCELLULAR LOCATION</scope>
</reference>
<reference key="12">
    <citation type="journal article" date="2021" name="Gut">
        <title>LPIAT1/MBOAT7 depletion increases triglyceride synthesis fueled by high phosphatidylinositol turnover.</title>
        <authorList>
            <person name="Tanaka Y."/>
            <person name="Shimanaka Y."/>
            <person name="Caddeo A."/>
            <person name="Kubo T."/>
            <person name="Mao Y."/>
            <person name="Kubota T."/>
            <person name="Kubota N."/>
            <person name="Yamauchi T."/>
            <person name="Mancina R.M."/>
            <person name="Baselli G."/>
            <person name="Luukkonen P."/>
            <person name="Pihlajamaeki J."/>
            <person name="Yki-Jaervinen H."/>
            <person name="Valenti L."/>
            <person name="Arai H."/>
            <person name="Romeo S."/>
            <person name="Kono N."/>
        </authorList>
    </citation>
    <scope>FUNCTION</scope>
</reference>
<reference key="13">
    <citation type="journal article" date="2016" name="Am. J. Hum. Genet.">
        <title>Mutations in MBOAT7, Encoding Lysophosphatidylinositol Acyltransferase I, Lead to Intellectual Disability Accompanied by Epilepsy and Autistic Features.</title>
        <authorList>
            <person name="Johansen A."/>
            <person name="Rosti R.O."/>
            <person name="Musaev D."/>
            <person name="Sticca E."/>
            <person name="Harripaul R."/>
            <person name="Zaki M."/>
            <person name="Caglayan A.O."/>
            <person name="Azam M."/>
            <person name="Sultan T."/>
            <person name="Froukh T."/>
            <person name="Reis A."/>
            <person name="Popp B."/>
            <person name="Ahmed I."/>
            <person name="John P."/>
            <person name="Ayub M."/>
            <person name="Ben-Omran T."/>
            <person name="Vincent J.B."/>
            <person name="Gleeson J.G."/>
            <person name="Abou Jamra R."/>
        </authorList>
    </citation>
    <scope>INVOLVEMENT IN MRT57</scope>
    <scope>VARIANT MRT57 253-GLU--ALA-259 DEL</scope>
</reference>
<name>MBOA7_HUMAN</name>
<accession>Q96N66</accession>
<accession>A9C4B6</accession>
<accession>B0V3I5</accession>
<accession>B4DQ87</accession>
<accession>Q05DF0</accession>
<accession>Q7L5N2</accession>
<accession>Q99908</accession>
<accession>Q9BPV2</accession>
<accession>Q9BRE9</accession>
<protein>
    <recommendedName>
        <fullName evidence="17">Membrane-bound acylglycerophosphatidylinositol O-acyltransferase MBOAT7</fullName>
        <ecNumber evidence="5 6">2.3.1.-</ecNumber>
    </recommendedName>
    <alternativeName>
        <fullName evidence="15">1-acylglycerophosphatidylinositol O-acyltransferase</fullName>
    </alternativeName>
    <alternativeName>
        <fullName>Bladder and breast carcinoma-overexpressed gene 1 protein</fullName>
    </alternativeName>
    <alternativeName>
        <fullName>Leukocyte receptor cluster member 4</fullName>
    </alternativeName>
    <alternativeName>
        <fullName evidence="13 14">Lysophosphatidylinositol acyltransferase</fullName>
        <shortName evidence="13">LPIAT</shortName>
        <shortName evidence="13">Lyso-PI acyltransferase</shortName>
    </alternativeName>
    <alternativeName>
        <fullName evidence="15">Lysophospholipid acyltransferase 7</fullName>
        <shortName evidence="15">LPLAT 7</shortName>
    </alternativeName>
    <alternativeName>
        <fullName evidence="13">Membrane-bound O-acyltransferase domain-containing protein 7</fullName>
        <shortName evidence="13">O-acyltransferase domain-containing protein 7</shortName>
        <shortName evidence="13">h-mboa-7</shortName>
    </alternativeName>
</protein>
<dbReference type="EC" id="2.3.1.-" evidence="5 6"/>
<dbReference type="EMBL" id="EU016381">
    <property type="protein sequence ID" value="ABV66273.1"/>
    <property type="molecule type" value="mRNA"/>
</dbReference>
<dbReference type="EMBL" id="AK055908">
    <property type="protein sequence ID" value="BAB71043.1"/>
    <property type="molecule type" value="mRNA"/>
</dbReference>
<dbReference type="EMBL" id="AK298689">
    <property type="protein sequence ID" value="BAG60849.1"/>
    <property type="molecule type" value="mRNA"/>
</dbReference>
<dbReference type="EMBL" id="CU151838">
    <property type="status" value="NOT_ANNOTATED_CDS"/>
    <property type="molecule type" value="Genomic_DNA"/>
</dbReference>
<dbReference type="EMBL" id="CU457734">
    <property type="status" value="NOT_ANNOTATED_CDS"/>
    <property type="molecule type" value="Genomic_DNA"/>
</dbReference>
<dbReference type="EMBL" id="CH471135">
    <property type="protein sequence ID" value="EAW72199.1"/>
    <property type="molecule type" value="Genomic_DNA"/>
</dbReference>
<dbReference type="EMBL" id="CH471135">
    <property type="protein sequence ID" value="EAW72202.1"/>
    <property type="molecule type" value="Genomic_DNA"/>
</dbReference>
<dbReference type="EMBL" id="BC002512">
    <property type="protein sequence ID" value="AAH02512.2"/>
    <property type="molecule type" value="mRNA"/>
</dbReference>
<dbReference type="EMBL" id="BC003164">
    <property type="protein sequence ID" value="AAH03164.2"/>
    <property type="molecule type" value="mRNA"/>
</dbReference>
<dbReference type="EMBL" id="BC006309">
    <property type="protein sequence ID" value="AAH06309.1"/>
    <property type="molecule type" value="mRNA"/>
</dbReference>
<dbReference type="EMBL" id="BC015857">
    <property type="protein sequence ID" value="AAH15857.1"/>
    <property type="molecule type" value="mRNA"/>
</dbReference>
<dbReference type="EMBL" id="S82470">
    <property type="protein sequence ID" value="AAB37433.1"/>
    <property type="status" value="ALT_FRAME"/>
    <property type="molecule type" value="mRNA"/>
</dbReference>
<dbReference type="CCDS" id="CCDS12883.1">
    <molecule id="Q96N66-1"/>
</dbReference>
<dbReference type="CCDS" id="CCDS54315.1">
    <molecule id="Q96N66-2"/>
</dbReference>
<dbReference type="CCDS" id="CCDS54316.1">
    <molecule id="Q96N66-3"/>
</dbReference>
<dbReference type="RefSeq" id="NP_001139528.1">
    <molecule id="Q96N66-2"/>
    <property type="nucleotide sequence ID" value="NM_001146056.3"/>
</dbReference>
<dbReference type="RefSeq" id="NP_001139554.1">
    <molecule id="Q96N66-3"/>
    <property type="nucleotide sequence ID" value="NM_001146082.3"/>
</dbReference>
<dbReference type="RefSeq" id="NP_001139555.1">
    <molecule id="Q96N66-2"/>
    <property type="nucleotide sequence ID" value="NM_001146083.3"/>
</dbReference>
<dbReference type="RefSeq" id="NP_077274.3">
    <molecule id="Q96N66-1"/>
    <property type="nucleotide sequence ID" value="NM_024298.4"/>
</dbReference>
<dbReference type="RefSeq" id="XP_011525601.1">
    <molecule id="Q96N66-1"/>
    <property type="nucleotide sequence ID" value="XM_011527299.4"/>
</dbReference>
<dbReference type="RefSeq" id="XP_011525602.1">
    <molecule id="Q96N66-1"/>
    <property type="nucleotide sequence ID" value="XM_011527300.3"/>
</dbReference>
<dbReference type="RefSeq" id="XP_054178092.1">
    <molecule id="Q96N66-1"/>
    <property type="nucleotide sequence ID" value="XM_054322117.1"/>
</dbReference>
<dbReference type="RefSeq" id="XP_054178093.1">
    <molecule id="Q96N66-1"/>
    <property type="nucleotide sequence ID" value="XM_054322118.1"/>
</dbReference>
<dbReference type="RefSeq" id="XP_054185677.1">
    <molecule id="Q96N66-1"/>
    <property type="nucleotide sequence ID" value="XM_054329702.1"/>
</dbReference>
<dbReference type="RefSeq" id="XP_054185678.1">
    <molecule id="Q96N66-1"/>
    <property type="nucleotide sequence ID" value="XM_054329703.1"/>
</dbReference>
<dbReference type="RefSeq" id="XP_054186179.1">
    <molecule id="Q96N66-1"/>
    <property type="nucleotide sequence ID" value="XM_054330204.1"/>
</dbReference>
<dbReference type="RefSeq" id="XP_054186475.1">
    <molecule id="Q96N66-1"/>
    <property type="nucleotide sequence ID" value="XM_054330500.1"/>
</dbReference>
<dbReference type="RefSeq" id="XP_054186725.1">
    <molecule id="Q96N66-1"/>
    <property type="nucleotide sequence ID" value="XM_054330750.1"/>
</dbReference>
<dbReference type="RefSeq" id="XP_054186956.1">
    <molecule id="Q96N66-1"/>
    <property type="nucleotide sequence ID" value="XM_054330981.1"/>
</dbReference>
<dbReference type="RefSeq" id="XP_054187239.1">
    <molecule id="Q96N66-1"/>
    <property type="nucleotide sequence ID" value="XM_054331264.1"/>
</dbReference>
<dbReference type="RefSeq" id="XP_054187508.1">
    <molecule id="Q96N66-1"/>
    <property type="nucleotide sequence ID" value="XM_054331533.1"/>
</dbReference>
<dbReference type="RefSeq" id="XP_054187509.1">
    <molecule id="Q96N66-1"/>
    <property type="nucleotide sequence ID" value="XM_054331534.1"/>
</dbReference>
<dbReference type="RefSeq" id="XP_054189553.1">
    <molecule id="Q96N66-1"/>
    <property type="nucleotide sequence ID" value="XM_054333578.1"/>
</dbReference>
<dbReference type="RefSeq" id="XP_054189655.1">
    <molecule id="Q96N66-1"/>
    <property type="nucleotide sequence ID" value="XM_054333680.1"/>
</dbReference>
<dbReference type="PDB" id="8ERC">
    <property type="method" value="EM"/>
    <property type="resolution" value="3.70 A"/>
    <property type="chains" value="A=1-472"/>
</dbReference>
<dbReference type="PDBsum" id="8ERC"/>
<dbReference type="EMDB" id="EMD-28552"/>
<dbReference type="SMR" id="Q96N66"/>
<dbReference type="BioGRID" id="122562">
    <property type="interactions" value="231"/>
</dbReference>
<dbReference type="FunCoup" id="Q96N66">
    <property type="interactions" value="1669"/>
</dbReference>
<dbReference type="IntAct" id="Q96N66">
    <property type="interactions" value="120"/>
</dbReference>
<dbReference type="MINT" id="Q96N66"/>
<dbReference type="STRING" id="9606.ENSP00000245615"/>
<dbReference type="SwissLipids" id="SLP:000000131"/>
<dbReference type="TCDB" id="2.A.50.2.5">
    <property type="family name" value="the glycerol uptake (gup) or membrane-bound acyl transferase (mboat) family"/>
</dbReference>
<dbReference type="GlyCosmos" id="Q96N66">
    <property type="glycosylation" value="1 site, No reported glycans"/>
</dbReference>
<dbReference type="GlyGen" id="Q96N66">
    <property type="glycosylation" value="3 sites, 1 O-linked glycan (1 site)"/>
</dbReference>
<dbReference type="iPTMnet" id="Q96N66"/>
<dbReference type="PhosphoSitePlus" id="Q96N66"/>
<dbReference type="SwissPalm" id="Q96N66"/>
<dbReference type="BioMuta" id="MBOAT7"/>
<dbReference type="DMDM" id="167008974"/>
<dbReference type="CPTAC" id="CPTAC-540"/>
<dbReference type="CPTAC" id="CPTAC-541"/>
<dbReference type="jPOST" id="Q96N66"/>
<dbReference type="MassIVE" id="Q96N66"/>
<dbReference type="PaxDb" id="9606-ENSP00000245615"/>
<dbReference type="PeptideAtlas" id="Q96N66"/>
<dbReference type="ProteomicsDB" id="77470">
    <molecule id="Q96N66-1"/>
</dbReference>
<dbReference type="ProteomicsDB" id="77471">
    <molecule id="Q96N66-2"/>
</dbReference>
<dbReference type="ProteomicsDB" id="77472">
    <molecule id="Q96N66-3"/>
</dbReference>
<dbReference type="Pumba" id="Q96N66"/>
<dbReference type="Antibodypedia" id="32830">
    <property type="antibodies" value="116 antibodies from 20 providers"/>
</dbReference>
<dbReference type="DNASU" id="79143"/>
<dbReference type="Ensembl" id="ENST00000245615.6">
    <molecule id="Q96N66-1"/>
    <property type="protein sequence ID" value="ENSP00000245615.1"/>
    <property type="gene ID" value="ENSG00000125505.17"/>
</dbReference>
<dbReference type="Ensembl" id="ENST00000338624.10">
    <molecule id="Q96N66-2"/>
    <property type="protein sequence ID" value="ENSP00000344377.5"/>
    <property type="gene ID" value="ENSG00000125505.17"/>
</dbReference>
<dbReference type="Ensembl" id="ENST00000391754.5">
    <molecule id="Q96N66-3"/>
    <property type="protein sequence ID" value="ENSP00000375634.1"/>
    <property type="gene ID" value="ENSG00000125505.17"/>
</dbReference>
<dbReference type="Ensembl" id="ENST00000431666.6">
    <molecule id="Q96N66-2"/>
    <property type="protein sequence ID" value="ENSP00000410503.2"/>
    <property type="gene ID" value="ENSG00000125505.17"/>
</dbReference>
<dbReference type="Ensembl" id="ENST00000610862.4">
    <molecule id="Q96N66-3"/>
    <property type="protein sequence ID" value="ENSP00000481119.1"/>
    <property type="gene ID" value="ENSG00000276935.4"/>
</dbReference>
<dbReference type="Ensembl" id="ENST00000611239.1">
    <molecule id="Q96N66-2"/>
    <property type="protein sequence ID" value="ENSP00000481947.1"/>
    <property type="gene ID" value="ENSG00000277025.4"/>
</dbReference>
<dbReference type="Ensembl" id="ENST00000611602.4">
    <molecule id="Q96N66-2"/>
    <property type="protein sequence ID" value="ENSP00000482369.1"/>
    <property type="gene ID" value="ENSG00000278322.4"/>
</dbReference>
<dbReference type="Ensembl" id="ENST00000612053.1">
    <molecule id="Q96N66-2"/>
    <property type="protein sequence ID" value="ENSP00000482884.1"/>
    <property type="gene ID" value="ENSG00000278519.4"/>
</dbReference>
<dbReference type="Ensembl" id="ENST00000612567.1">
    <molecule id="Q96N66-2"/>
    <property type="protein sequence ID" value="ENSP00000483526.1"/>
    <property type="gene ID" value="ENSG00000277733.4"/>
</dbReference>
<dbReference type="Ensembl" id="ENST00000613506.4">
    <molecule id="Q96N66-1"/>
    <property type="protein sequence ID" value="ENSP00000478965.1"/>
    <property type="gene ID" value="ENSG00000274194.4"/>
</dbReference>
<dbReference type="Ensembl" id="ENST00000613746.4">
    <molecule id="Q96N66-1"/>
    <property type="protein sequence ID" value="ENSP00000484933.1"/>
    <property type="gene ID" value="ENSG00000275118.4"/>
</dbReference>
<dbReference type="Ensembl" id="ENST00000614279.1">
    <molecule id="Q96N66-2"/>
    <property type="protein sequence ID" value="ENSP00000480894.1"/>
    <property type="gene ID" value="ENSG00000276935.4"/>
</dbReference>
<dbReference type="Ensembl" id="ENST00000615282.4">
    <molecule id="Q96N66-2"/>
    <property type="protein sequence ID" value="ENSP00000483987.1"/>
    <property type="gene ID" value="ENSG00000275118.4"/>
</dbReference>
<dbReference type="Ensembl" id="ENST00000615453.4">
    <molecule id="Q96N66-1"/>
    <property type="protein sequence ID" value="ENSP00000482625.1"/>
    <property type="gene ID" value="ENSG00000278519.4"/>
</dbReference>
<dbReference type="Ensembl" id="ENST00000617012.4">
    <molecule id="Q96N66-1"/>
    <property type="protein sequence ID" value="ENSP00000484199.1"/>
    <property type="gene ID" value="ENSG00000276935.4"/>
</dbReference>
<dbReference type="Ensembl" id="ENST00000617656.4">
    <molecule id="Q96N66-2"/>
    <property type="protein sequence ID" value="ENSP00000481864.1"/>
    <property type="gene ID" value="ENSG00000274194.4"/>
</dbReference>
<dbReference type="Ensembl" id="ENST00000617772.1">
    <molecule id="Q96N66-2"/>
    <property type="protein sequence ID" value="ENSP00000480575.1"/>
    <property type="gene ID" value="ENSG00000274194.4"/>
</dbReference>
<dbReference type="Ensembl" id="ENST00000618378.4">
    <molecule id="Q96N66-1"/>
    <property type="protein sequence ID" value="ENSP00000482252.1"/>
    <property type="gene ID" value="ENSG00000277025.4"/>
</dbReference>
<dbReference type="Ensembl" id="ENST00000618826.4">
    <molecule id="Q96N66-2"/>
    <property type="protein sequence ID" value="ENSP00000483839.1"/>
    <property type="gene ID" value="ENSG00000277923.4"/>
</dbReference>
<dbReference type="Ensembl" id="ENST00000618899.4">
    <molecule id="Q96N66-3"/>
    <property type="protein sequence ID" value="ENSP00000480531.1"/>
    <property type="gene ID" value="ENSG00000273592.4"/>
</dbReference>
<dbReference type="Ensembl" id="ENST00000619670.4">
    <molecule id="Q96N66-3"/>
    <property type="protein sequence ID" value="ENSP00000479750.1"/>
    <property type="gene ID" value="ENSG00000275118.4"/>
</dbReference>
<dbReference type="Ensembl" id="ENST00000619745.4">
    <molecule id="Q96N66-2"/>
    <property type="protein sequence ID" value="ENSP00000481544.1"/>
    <property type="gene ID" value="ENSG00000277025.4"/>
</dbReference>
<dbReference type="Ensembl" id="ENST00000619842.4">
    <molecule id="Q96N66-1"/>
    <property type="protein sequence ID" value="ENSP00000481455.1"/>
    <property type="gene ID" value="ENSG00000277923.4"/>
</dbReference>
<dbReference type="Ensembl" id="ENST00000619855.4">
    <molecule id="Q96N66-1"/>
    <property type="protein sequence ID" value="ENSP00000484954.1"/>
    <property type="gene ID" value="ENSG00000273592.4"/>
</dbReference>
<dbReference type="Ensembl" id="ENST00000620311.1">
    <molecule id="Q96N66-2"/>
    <property type="protein sequence ID" value="ENSP00000478522.1"/>
    <property type="gene ID" value="ENSG00000277923.4"/>
</dbReference>
<dbReference type="Ensembl" id="ENST00000620371.1">
    <molecule id="Q96N66-2"/>
    <property type="protein sequence ID" value="ENSP00000479760.1"/>
    <property type="gene ID" value="ENSG00000273592.4"/>
</dbReference>
<dbReference type="Ensembl" id="ENST00000620636.1">
    <molecule id="Q96N66-2"/>
    <property type="protein sequence ID" value="ENSP00000482742.1"/>
    <property type="gene ID" value="ENSG00000278322.4"/>
</dbReference>
<dbReference type="Ensembl" id="ENST00000621146.4">
    <molecule id="Q96N66-2"/>
    <property type="protein sequence ID" value="ENSP00000481758.1"/>
    <property type="gene ID" value="ENSG00000277733.4"/>
</dbReference>
<dbReference type="Ensembl" id="ENST00000621455.4">
    <molecule id="Q96N66-2"/>
    <property type="protein sequence ID" value="ENSP00000477891.1"/>
    <property type="gene ID" value="ENSG00000278519.4"/>
</dbReference>
<dbReference type="Ensembl" id="ENST00000621612.4">
    <molecule id="Q96N66-1"/>
    <property type="protein sequence ID" value="ENSP00000478088.1"/>
    <property type="gene ID" value="ENSG00000278322.4"/>
</dbReference>
<dbReference type="Ensembl" id="ENST00000621875.4">
    <molecule id="Q96N66-1"/>
    <property type="protein sequence ID" value="ENSP00000478041.1"/>
    <property type="gene ID" value="ENSG00000277733.4"/>
</dbReference>
<dbReference type="GeneID" id="79143"/>
<dbReference type="KEGG" id="hsa:79143"/>
<dbReference type="MANE-Select" id="ENST00000245615.6">
    <property type="protein sequence ID" value="ENSP00000245615.1"/>
    <property type="RefSeq nucleotide sequence ID" value="NM_024298.5"/>
    <property type="RefSeq protein sequence ID" value="NP_077274.3"/>
</dbReference>
<dbReference type="UCSC" id="uc032icm.2">
    <molecule id="Q96N66-1"/>
    <property type="organism name" value="human"/>
</dbReference>
<dbReference type="AGR" id="HGNC:15505"/>
<dbReference type="CTD" id="79143"/>
<dbReference type="DisGeNET" id="79143"/>
<dbReference type="GeneCards" id="MBOAT7"/>
<dbReference type="HGNC" id="HGNC:15505">
    <property type="gene designation" value="MBOAT7"/>
</dbReference>
<dbReference type="HPA" id="ENSG00000125505">
    <property type="expression patterns" value="Tissue enhanced (adrenal)"/>
</dbReference>
<dbReference type="MalaCards" id="MBOAT7"/>
<dbReference type="MIM" id="606048">
    <property type="type" value="gene"/>
</dbReference>
<dbReference type="MIM" id="617188">
    <property type="type" value="phenotype"/>
</dbReference>
<dbReference type="neXtProt" id="NX_Q96N66"/>
<dbReference type="OpenTargets" id="ENSG00000125505"/>
<dbReference type="Orphanet" id="88616">
    <property type="disease" value="Autosomal recessive non-syndromic intellectual disability"/>
</dbReference>
<dbReference type="PharmGKB" id="PA162395057"/>
<dbReference type="VEuPathDB" id="HostDB:ENSG00000125505"/>
<dbReference type="eggNOG" id="KOG2706">
    <property type="taxonomic scope" value="Eukaryota"/>
</dbReference>
<dbReference type="GeneTree" id="ENSGT01030000234564"/>
<dbReference type="HOGENOM" id="CLU_011340_1_1_1"/>
<dbReference type="InParanoid" id="Q96N66"/>
<dbReference type="OMA" id="TNMIQML"/>
<dbReference type="OrthoDB" id="7663182at2759"/>
<dbReference type="PAN-GO" id="Q96N66">
    <property type="GO annotations" value="5 GO annotations based on evolutionary models"/>
</dbReference>
<dbReference type="PhylomeDB" id="Q96N66"/>
<dbReference type="TreeFam" id="TF320024"/>
<dbReference type="BRENDA" id="2.3.1.B46">
    <property type="organism ID" value="2681"/>
</dbReference>
<dbReference type="PathwayCommons" id="Q96N66"/>
<dbReference type="Reactome" id="R-HSA-1482922">
    <property type="pathway name" value="Acyl chain remodelling of PI"/>
</dbReference>
<dbReference type="SignaLink" id="Q96N66"/>
<dbReference type="SIGNOR" id="Q96N66"/>
<dbReference type="UniPathway" id="UPA00085"/>
<dbReference type="BioGRID-ORCS" id="79143">
    <property type="hits" value="26 hits in 1169 CRISPR screens"/>
</dbReference>
<dbReference type="ChiTaRS" id="MBOAT7">
    <property type="organism name" value="human"/>
</dbReference>
<dbReference type="GenomeRNAi" id="79143"/>
<dbReference type="Pharos" id="Q96N66">
    <property type="development level" value="Tbio"/>
</dbReference>
<dbReference type="PRO" id="PR:Q96N66"/>
<dbReference type="Proteomes" id="UP000005640">
    <property type="component" value="Chromosome 19"/>
</dbReference>
<dbReference type="RNAct" id="Q96N66">
    <property type="molecule type" value="protein"/>
</dbReference>
<dbReference type="Bgee" id="ENSG00000125505">
    <property type="expression patterns" value="Expressed in blood and 100 other cell types or tissues"/>
</dbReference>
<dbReference type="ExpressionAtlas" id="Q96N66">
    <property type="expression patterns" value="baseline and differential"/>
</dbReference>
<dbReference type="GO" id="GO:0005783">
    <property type="term" value="C:endoplasmic reticulum"/>
    <property type="evidence" value="ECO:0000314"/>
    <property type="project" value="UniProtKB"/>
</dbReference>
<dbReference type="GO" id="GO:0005789">
    <property type="term" value="C:endoplasmic reticulum membrane"/>
    <property type="evidence" value="ECO:0000304"/>
    <property type="project" value="Reactome"/>
</dbReference>
<dbReference type="GO" id="GO:0016020">
    <property type="term" value="C:membrane"/>
    <property type="evidence" value="ECO:0007005"/>
    <property type="project" value="UniProtKB"/>
</dbReference>
<dbReference type="GO" id="GO:0044233">
    <property type="term" value="C:mitochondria-associated endoplasmic reticulum membrane contact site"/>
    <property type="evidence" value="ECO:0000314"/>
    <property type="project" value="UniProtKB"/>
</dbReference>
<dbReference type="GO" id="GO:0003841">
    <property type="term" value="F:1-acylglycerol-3-phosphate O-acyltransferase activity"/>
    <property type="evidence" value="ECO:0000304"/>
    <property type="project" value="Reactome"/>
</dbReference>
<dbReference type="GO" id="GO:0047144">
    <property type="term" value="F:2-acylglycerol-3-phosphate O-acyltransferase activity"/>
    <property type="evidence" value="ECO:0000304"/>
    <property type="project" value="Reactome"/>
</dbReference>
<dbReference type="GO" id="GO:0071617">
    <property type="term" value="F:lysophospholipid acyltransferase activity"/>
    <property type="evidence" value="ECO:0000250"/>
    <property type="project" value="UniProtKB"/>
</dbReference>
<dbReference type="GO" id="GO:0008374">
    <property type="term" value="F:O-acyltransferase activity"/>
    <property type="evidence" value="ECO:0000314"/>
    <property type="project" value="UniProtKB"/>
</dbReference>
<dbReference type="GO" id="GO:0021819">
    <property type="term" value="P:layer formation in cerebral cortex"/>
    <property type="evidence" value="ECO:0000250"/>
    <property type="project" value="UniProtKB"/>
</dbReference>
<dbReference type="GO" id="GO:0030258">
    <property type="term" value="P:lipid modification"/>
    <property type="evidence" value="ECO:0000318"/>
    <property type="project" value="GO_Central"/>
</dbReference>
<dbReference type="GO" id="GO:0036151">
    <property type="term" value="P:phosphatidylcholine acyl-chain remodeling"/>
    <property type="evidence" value="ECO:0000314"/>
    <property type="project" value="UniProtKB"/>
</dbReference>
<dbReference type="GO" id="GO:0036149">
    <property type="term" value="P:phosphatidylinositol acyl-chain remodeling"/>
    <property type="evidence" value="ECO:0000314"/>
    <property type="project" value="UniProtKB"/>
</dbReference>
<dbReference type="GO" id="GO:0006661">
    <property type="term" value="P:phosphatidylinositol biosynthetic process"/>
    <property type="evidence" value="ECO:0000315"/>
    <property type="project" value="UniProtKB"/>
</dbReference>
<dbReference type="GO" id="GO:0090207">
    <property type="term" value="P:regulation of triglyceride metabolic process"/>
    <property type="evidence" value="ECO:0000315"/>
    <property type="project" value="UniProtKB"/>
</dbReference>
<dbReference type="GO" id="GO:0021591">
    <property type="term" value="P:ventricular system development"/>
    <property type="evidence" value="ECO:0007669"/>
    <property type="project" value="Ensembl"/>
</dbReference>
<dbReference type="InterPro" id="IPR049941">
    <property type="entry name" value="LPLAT_7/PORCN-like"/>
</dbReference>
<dbReference type="InterPro" id="IPR004299">
    <property type="entry name" value="MBOAT_fam"/>
</dbReference>
<dbReference type="PANTHER" id="PTHR13906:SF16">
    <property type="entry name" value="LYSOPHOSPHOLIPID ACYLTRANSFERASE 7"/>
    <property type="match status" value="1"/>
</dbReference>
<dbReference type="PANTHER" id="PTHR13906">
    <property type="entry name" value="PORCUPINE"/>
    <property type="match status" value="1"/>
</dbReference>
<dbReference type="Pfam" id="PF03062">
    <property type="entry name" value="MBOAT"/>
    <property type="match status" value="1"/>
</dbReference>
<organism>
    <name type="scientific">Homo sapiens</name>
    <name type="common">Human</name>
    <dbReference type="NCBI Taxonomy" id="9606"/>
    <lineage>
        <taxon>Eukaryota</taxon>
        <taxon>Metazoa</taxon>
        <taxon>Chordata</taxon>
        <taxon>Craniata</taxon>
        <taxon>Vertebrata</taxon>
        <taxon>Euteleostomi</taxon>
        <taxon>Mammalia</taxon>
        <taxon>Eutheria</taxon>
        <taxon>Euarchontoglires</taxon>
        <taxon>Primates</taxon>
        <taxon>Haplorrhini</taxon>
        <taxon>Catarrhini</taxon>
        <taxon>Hominidae</taxon>
        <taxon>Homo</taxon>
    </lineage>
</organism>